<proteinExistence type="inferred from homology"/>
<comment type="function">
    <text evidence="1">One of the components of the core complex of photosystem II (PSII). It binds chlorophyll and helps catalyze the primary light-induced photochemical processes of PSII. PSII is a light-driven water:plastoquinone oxidoreductase, using light energy to abstract electrons from H(2)O, generating O(2) and a proton gradient subsequently used for ATP formation.</text>
</comment>
<comment type="cofactor">
    <text evidence="1">Binds multiple chlorophylls and provides some of the ligands for the Ca-4Mn-5O cluster of the oxygen-evolving complex. It may also provide a ligand for a Cl- that is required for oxygen evolution. PSII binds additional chlorophylls, carotenoids and specific lipids.</text>
</comment>
<comment type="subunit">
    <text evidence="1">PSII is composed of 1 copy each of membrane proteins PsbA, PsbB, PsbC, PsbD, PsbE, PsbF, PsbH, PsbI, PsbJ, PsbK, PsbL, PsbM, PsbT, PsbX, PsbY, PsbZ, Psb30/Ycf12, at least 3 peripheral proteins of the oxygen-evolving complex and a large number of cofactors. It forms dimeric complexes.</text>
</comment>
<comment type="subcellular location">
    <subcellularLocation>
        <location evidence="1">Plastid</location>
        <location evidence="1">Chloroplast thylakoid membrane</location>
        <topology evidence="1">Multi-pass membrane protein</topology>
    </subcellularLocation>
</comment>
<comment type="similarity">
    <text evidence="1">Belongs to the PsbB/PsbC family. PsbC subfamily.</text>
</comment>
<protein>
    <recommendedName>
        <fullName evidence="1">Photosystem II CP43 reaction center protein</fullName>
    </recommendedName>
    <alternativeName>
        <fullName evidence="1">PSII 43 kDa protein</fullName>
    </alternativeName>
    <alternativeName>
        <fullName evidence="1">Protein CP-43</fullName>
    </alternativeName>
</protein>
<gene>
    <name evidence="1" type="primary">psbC</name>
    <name type="ordered locus">Grc000036</name>
</gene>
<keyword id="KW-0148">Chlorophyll</keyword>
<keyword id="KW-0150">Chloroplast</keyword>
<keyword id="KW-0157">Chromophore</keyword>
<keyword id="KW-0464">Manganese</keyword>
<keyword id="KW-0472">Membrane</keyword>
<keyword id="KW-0479">Metal-binding</keyword>
<keyword id="KW-0602">Photosynthesis</keyword>
<keyword id="KW-0604">Photosystem II</keyword>
<keyword id="KW-0934">Plastid</keyword>
<keyword id="KW-0793">Thylakoid</keyword>
<keyword id="KW-0812">Transmembrane</keyword>
<keyword id="KW-1133">Transmembrane helix</keyword>
<evidence type="ECO:0000255" key="1">
    <source>
        <dbReference type="HAMAP-Rule" id="MF_01496"/>
    </source>
</evidence>
<dbReference type="EMBL" id="AY673996">
    <property type="protein sequence ID" value="AAT79618.1"/>
    <property type="molecule type" value="Genomic_DNA"/>
</dbReference>
<dbReference type="RefSeq" id="YP_063543.2">
    <property type="nucleotide sequence ID" value="NC_006137.1"/>
</dbReference>
<dbReference type="SMR" id="Q6B917"/>
<dbReference type="GeneID" id="2944079"/>
<dbReference type="GO" id="GO:0009535">
    <property type="term" value="C:chloroplast thylakoid membrane"/>
    <property type="evidence" value="ECO:0007669"/>
    <property type="project" value="UniProtKB-SubCell"/>
</dbReference>
<dbReference type="GO" id="GO:0009523">
    <property type="term" value="C:photosystem II"/>
    <property type="evidence" value="ECO:0007669"/>
    <property type="project" value="UniProtKB-KW"/>
</dbReference>
<dbReference type="GO" id="GO:0016168">
    <property type="term" value="F:chlorophyll binding"/>
    <property type="evidence" value="ECO:0007669"/>
    <property type="project" value="UniProtKB-UniRule"/>
</dbReference>
<dbReference type="GO" id="GO:0045156">
    <property type="term" value="F:electron transporter, transferring electrons within the cyclic electron transport pathway of photosynthesis activity"/>
    <property type="evidence" value="ECO:0007669"/>
    <property type="project" value="InterPro"/>
</dbReference>
<dbReference type="GO" id="GO:0046872">
    <property type="term" value="F:metal ion binding"/>
    <property type="evidence" value="ECO:0007669"/>
    <property type="project" value="UniProtKB-KW"/>
</dbReference>
<dbReference type="GO" id="GO:0009772">
    <property type="term" value="P:photosynthetic electron transport in photosystem II"/>
    <property type="evidence" value="ECO:0007669"/>
    <property type="project" value="InterPro"/>
</dbReference>
<dbReference type="FunFam" id="1.10.10.670:FF:000001">
    <property type="entry name" value="Photosystem II CP43 reaction center protein"/>
    <property type="match status" value="1"/>
</dbReference>
<dbReference type="Gene3D" id="1.10.10.670">
    <property type="entry name" value="photosystem ii from thermosynechococcus elongatus"/>
    <property type="match status" value="1"/>
</dbReference>
<dbReference type="HAMAP" id="MF_01496">
    <property type="entry name" value="PSII_PsbC_CP43"/>
    <property type="match status" value="1"/>
</dbReference>
<dbReference type="InterPro" id="IPR000932">
    <property type="entry name" value="PS_antenna-like"/>
</dbReference>
<dbReference type="InterPro" id="IPR036001">
    <property type="entry name" value="PS_II_antenna-like_sf"/>
</dbReference>
<dbReference type="InterPro" id="IPR005869">
    <property type="entry name" value="PSII_PsbC"/>
</dbReference>
<dbReference type="InterPro" id="IPR044900">
    <property type="entry name" value="PSII_PsbC_sf"/>
</dbReference>
<dbReference type="NCBIfam" id="TIGR01153">
    <property type="entry name" value="psbC"/>
    <property type="match status" value="1"/>
</dbReference>
<dbReference type="Pfam" id="PF00421">
    <property type="entry name" value="PSII"/>
    <property type="match status" value="1"/>
</dbReference>
<dbReference type="SUPFAM" id="SSF161077">
    <property type="entry name" value="Photosystem II antenna protein-like"/>
    <property type="match status" value="1"/>
</dbReference>
<name>PSBC_GRATL</name>
<reference key="1">
    <citation type="journal article" date="2004" name="J. Mol. Evol.">
        <title>Comparative analysis of the complete plastid genome sequence of the red alga Gracilaria tenuistipitata var. liui provides insights into the evolution of rhodoplasts and their relationship to other plastids.</title>
        <authorList>
            <person name="Hagopian J.C."/>
            <person name="Reis M."/>
            <person name="Kitajima J.P."/>
            <person name="Bhattacharya D."/>
            <person name="de Oliveira M.C."/>
        </authorList>
    </citation>
    <scope>NUCLEOTIDE SEQUENCE [LARGE SCALE GENOMIC DNA]</scope>
</reference>
<geneLocation type="chloroplast"/>
<accession>Q6B917</accession>
<feature type="propeptide" id="PRO_0000431224" evidence="1">
    <location>
        <begin position="1"/>
        <end position="28"/>
    </location>
</feature>
<feature type="chain" id="PRO_0000361519" description="Photosystem II CP43 reaction center protein" evidence="1">
    <location>
        <begin position="29"/>
        <end position="486"/>
    </location>
</feature>
<feature type="transmembrane region" description="Helical" evidence="1">
    <location>
        <begin position="82"/>
        <end position="106"/>
    </location>
</feature>
<feature type="transmembrane region" description="Helical" evidence="1">
    <location>
        <begin position="147"/>
        <end position="168"/>
    </location>
</feature>
<feature type="transmembrane region" description="Helical" evidence="1">
    <location>
        <begin position="191"/>
        <end position="213"/>
    </location>
</feature>
<feature type="transmembrane region" description="Helical" evidence="1">
    <location>
        <begin position="268"/>
        <end position="288"/>
    </location>
</feature>
<feature type="transmembrane region" description="Helical" evidence="1">
    <location>
        <begin position="304"/>
        <end position="325"/>
    </location>
</feature>
<feature type="transmembrane region" description="Helical" evidence="1">
    <location>
        <begin position="460"/>
        <end position="484"/>
    </location>
</feature>
<feature type="binding site" evidence="1">
    <location>
        <position position="380"/>
    </location>
    <ligand>
        <name>[CaMn4O5] cluster</name>
        <dbReference type="ChEBI" id="CHEBI:189552"/>
    </ligand>
</feature>
<sequence length="486" mass="53671">MKVFVHGWQHKISHTRILYSLRRFYHVETPFNQNIVSGRDLESTGFAWWSGNARLINVSGKLLGAHVAHAGIMVFWTGAMTLFEVAHFIPEKPLYEQGFILIPHLATLGWGVGPGGEIINIYPYFVVGILHLISSAVLGFGGLYHALIGPDTLEESFPFFGYDWRDKNKMTTILGIHLVLLGIGSFLLVIKALFFGGVYDTWAPGGGDVRLINNPTLNPAIIFGYVLKSPFGGDGWIVSVNNMEDLIGGHVWIGVVCIAGGIWHILTKPFAWARRAFVWSGEAYLSYSLGALSLMGLTASNYVWYNNTAYPSEFYGPTGPEASQAQAFTFLVRDQRLGANVASAQGPTGLGKYLMRSPSGEIIFGGETMRFWDLRAPWVEPLRGANGLDLNKIKNDIQPWQERRAAEYMTHAPLGSLNSVGGVATEINSVNYVSPRSWLTTSHFFLGFFLFIGHLWHAGRARAAAAGFEKGINRENEAVLSMRPLD</sequence>
<organism>
    <name type="scientific">Gracilaria tenuistipitata var. liui</name>
    <name type="common">Red alga</name>
    <dbReference type="NCBI Taxonomy" id="285951"/>
    <lineage>
        <taxon>Eukaryota</taxon>
        <taxon>Rhodophyta</taxon>
        <taxon>Florideophyceae</taxon>
        <taxon>Rhodymeniophycidae</taxon>
        <taxon>Gracilariales</taxon>
        <taxon>Gracilariaceae</taxon>
        <taxon>Gracilaria</taxon>
        <taxon>Gracilaria tenuistipitata</taxon>
    </lineage>
</organism>